<protein>
    <recommendedName>
        <fullName evidence="1">Peptide methionine sulfoxide reductase MsrB</fullName>
        <ecNumber evidence="1">1.8.4.12</ecNumber>
    </recommendedName>
    <alternativeName>
        <fullName evidence="1">Peptide-methionine (R)-S-oxide reductase</fullName>
    </alternativeName>
</protein>
<proteinExistence type="inferred from homology"/>
<keyword id="KW-0560">Oxidoreductase</keyword>
<accession>A8FEA3</accession>
<gene>
    <name evidence="1" type="primary">msrB</name>
    <name type="ordered locus">BPUM_1900</name>
</gene>
<evidence type="ECO:0000255" key="1">
    <source>
        <dbReference type="HAMAP-Rule" id="MF_01400"/>
    </source>
</evidence>
<evidence type="ECO:0000255" key="2">
    <source>
        <dbReference type="PROSITE-ProRule" id="PRU01126"/>
    </source>
</evidence>
<organism>
    <name type="scientific">Bacillus pumilus (strain SAFR-032)</name>
    <dbReference type="NCBI Taxonomy" id="315750"/>
    <lineage>
        <taxon>Bacteria</taxon>
        <taxon>Bacillati</taxon>
        <taxon>Bacillota</taxon>
        <taxon>Bacilli</taxon>
        <taxon>Bacillales</taxon>
        <taxon>Bacillaceae</taxon>
        <taxon>Bacillus</taxon>
    </lineage>
</organism>
<dbReference type="EC" id="1.8.4.12" evidence="1"/>
<dbReference type="EMBL" id="CP000813">
    <property type="protein sequence ID" value="ABV62570.1"/>
    <property type="molecule type" value="Genomic_DNA"/>
</dbReference>
<dbReference type="RefSeq" id="WP_012010290.1">
    <property type="nucleotide sequence ID" value="NZ_VEIS01000001.1"/>
</dbReference>
<dbReference type="SMR" id="A8FEA3"/>
<dbReference type="STRING" id="315750.BPUM_1900"/>
<dbReference type="GeneID" id="5621164"/>
<dbReference type="KEGG" id="bpu:BPUM_1900"/>
<dbReference type="eggNOG" id="COG0229">
    <property type="taxonomic scope" value="Bacteria"/>
</dbReference>
<dbReference type="HOGENOM" id="CLU_031040_8_5_9"/>
<dbReference type="OrthoDB" id="4174719at2"/>
<dbReference type="Proteomes" id="UP000001355">
    <property type="component" value="Chromosome"/>
</dbReference>
<dbReference type="GO" id="GO:0005737">
    <property type="term" value="C:cytoplasm"/>
    <property type="evidence" value="ECO:0007669"/>
    <property type="project" value="TreeGrafter"/>
</dbReference>
<dbReference type="GO" id="GO:0033743">
    <property type="term" value="F:peptide-methionine (R)-S-oxide reductase activity"/>
    <property type="evidence" value="ECO:0007669"/>
    <property type="project" value="UniProtKB-UniRule"/>
</dbReference>
<dbReference type="GO" id="GO:0030091">
    <property type="term" value="P:protein repair"/>
    <property type="evidence" value="ECO:0007669"/>
    <property type="project" value="InterPro"/>
</dbReference>
<dbReference type="GO" id="GO:0006979">
    <property type="term" value="P:response to oxidative stress"/>
    <property type="evidence" value="ECO:0007669"/>
    <property type="project" value="InterPro"/>
</dbReference>
<dbReference type="FunFam" id="2.170.150.20:FF:000003">
    <property type="entry name" value="Peptide methionine sulfoxide reductase MsrB"/>
    <property type="match status" value="1"/>
</dbReference>
<dbReference type="Gene3D" id="2.170.150.20">
    <property type="entry name" value="Peptide methionine sulfoxide reductase"/>
    <property type="match status" value="1"/>
</dbReference>
<dbReference type="HAMAP" id="MF_01400">
    <property type="entry name" value="MsrB"/>
    <property type="match status" value="1"/>
</dbReference>
<dbReference type="InterPro" id="IPR028427">
    <property type="entry name" value="Met_Sox_Rdtase_MsrB"/>
</dbReference>
<dbReference type="InterPro" id="IPR002579">
    <property type="entry name" value="Met_Sox_Rdtase_MsrB_dom"/>
</dbReference>
<dbReference type="InterPro" id="IPR011057">
    <property type="entry name" value="Mss4-like_sf"/>
</dbReference>
<dbReference type="NCBIfam" id="TIGR00357">
    <property type="entry name" value="peptide-methionine (R)-S-oxide reductase MsrB"/>
    <property type="match status" value="1"/>
</dbReference>
<dbReference type="PANTHER" id="PTHR10173">
    <property type="entry name" value="METHIONINE SULFOXIDE REDUCTASE"/>
    <property type="match status" value="1"/>
</dbReference>
<dbReference type="PANTHER" id="PTHR10173:SF59">
    <property type="entry name" value="PEPTIDE METHIONINE SULFOXIDE REDUCTASE MSRA_MSRB"/>
    <property type="match status" value="1"/>
</dbReference>
<dbReference type="Pfam" id="PF01641">
    <property type="entry name" value="SelR"/>
    <property type="match status" value="1"/>
</dbReference>
<dbReference type="SUPFAM" id="SSF51316">
    <property type="entry name" value="Mss4-like"/>
    <property type="match status" value="1"/>
</dbReference>
<dbReference type="PROSITE" id="PS51790">
    <property type="entry name" value="MSRB"/>
    <property type="match status" value="1"/>
</dbReference>
<comment type="catalytic activity">
    <reaction evidence="1">
        <text>L-methionyl-[protein] + [thioredoxin]-disulfide + H2O = L-methionyl-(R)-S-oxide-[protein] + [thioredoxin]-dithiol</text>
        <dbReference type="Rhea" id="RHEA:24164"/>
        <dbReference type="Rhea" id="RHEA-COMP:10698"/>
        <dbReference type="Rhea" id="RHEA-COMP:10700"/>
        <dbReference type="Rhea" id="RHEA-COMP:12313"/>
        <dbReference type="Rhea" id="RHEA-COMP:12314"/>
        <dbReference type="ChEBI" id="CHEBI:15377"/>
        <dbReference type="ChEBI" id="CHEBI:16044"/>
        <dbReference type="ChEBI" id="CHEBI:29950"/>
        <dbReference type="ChEBI" id="CHEBI:45764"/>
        <dbReference type="ChEBI" id="CHEBI:50058"/>
        <dbReference type="EC" id="1.8.4.12"/>
    </reaction>
</comment>
<comment type="similarity">
    <text evidence="1">Belongs to the MsrB Met sulfoxide reductase family.</text>
</comment>
<feature type="chain" id="PRO_1000068265" description="Peptide methionine sulfoxide reductase MsrB">
    <location>
        <begin position="1"/>
        <end position="143"/>
    </location>
</feature>
<feature type="domain" description="MsrB" evidence="2">
    <location>
        <begin position="5"/>
        <end position="127"/>
    </location>
</feature>
<feature type="active site" description="Nucleophile" evidence="2">
    <location>
        <position position="116"/>
    </location>
</feature>
<name>MSRB_BACP2</name>
<reference key="1">
    <citation type="journal article" date="2007" name="PLoS ONE">
        <title>Paradoxical DNA repair and peroxide resistance gene conservation in Bacillus pumilus SAFR-032.</title>
        <authorList>
            <person name="Gioia J."/>
            <person name="Yerrapragada S."/>
            <person name="Qin X."/>
            <person name="Jiang H."/>
            <person name="Igboeli O.C."/>
            <person name="Muzny D."/>
            <person name="Dugan-Rocha S."/>
            <person name="Ding Y."/>
            <person name="Hawes A."/>
            <person name="Liu W."/>
            <person name="Perez L."/>
            <person name="Kovar C."/>
            <person name="Dinh H."/>
            <person name="Lee S."/>
            <person name="Nazareth L."/>
            <person name="Blyth P."/>
            <person name="Holder M."/>
            <person name="Buhay C."/>
            <person name="Tirumalai M.R."/>
            <person name="Liu Y."/>
            <person name="Dasgupta I."/>
            <person name="Bokhetache L."/>
            <person name="Fujita M."/>
            <person name="Karouia F."/>
            <person name="Eswara Moorthy P."/>
            <person name="Siefert J."/>
            <person name="Uzman A."/>
            <person name="Buzumbo P."/>
            <person name="Verma A."/>
            <person name="Zwiya H."/>
            <person name="McWilliams B.D."/>
            <person name="Olowu A."/>
            <person name="Clinkenbeard K.D."/>
            <person name="Newcombe D."/>
            <person name="Golebiewski L."/>
            <person name="Petrosino J.F."/>
            <person name="Nicholson W.L."/>
            <person name="Fox G.E."/>
            <person name="Venkateswaran K."/>
            <person name="Highlander S.K."/>
            <person name="Weinstock G.M."/>
        </authorList>
    </citation>
    <scope>NUCLEOTIDE SEQUENCE [LARGE SCALE GENOMIC DNA]</scope>
    <source>
        <strain>SAFR-032</strain>
    </source>
</reference>
<sequence length="143" mass="16370">MTNDKEKRLKELNRMQYEVTQNNGTEPPFQNEFWDHKEEGIYVDIISGKPLFSSLDKFDAHCGWPSFTKPLEDEEVAEKVDKSHGMVRTEVRSKTADSHLGHVFPDGPGPNGLRYCINSAALKFIPKDDLEKEGYGDLKHLFD</sequence>